<gene>
    <name evidence="1" type="primary">rplV</name>
    <name type="ordered locus">Dde_2252</name>
</gene>
<proteinExistence type="inferred from homology"/>
<sequence length="110" mass="12233">MQAKATAKFVRVSPRKARLVAQNVKGKPVEDAMNILRFTPQKAGGLIFKVMHSALANAEQLPGIDVDAMVVKQVIINEGPTWKRFLPRSMGRANRILKRTSHITVILEES</sequence>
<organism>
    <name type="scientific">Oleidesulfovibrio alaskensis (strain ATCC BAA-1058 / DSM 17464 / G20)</name>
    <name type="common">Desulfovibrio alaskensis</name>
    <dbReference type="NCBI Taxonomy" id="207559"/>
    <lineage>
        <taxon>Bacteria</taxon>
        <taxon>Pseudomonadati</taxon>
        <taxon>Thermodesulfobacteriota</taxon>
        <taxon>Desulfovibrionia</taxon>
        <taxon>Desulfovibrionales</taxon>
        <taxon>Desulfovibrionaceae</taxon>
        <taxon>Oleidesulfovibrio</taxon>
    </lineage>
</organism>
<feature type="chain" id="PRO_0000243147" description="Large ribosomal subunit protein uL22">
    <location>
        <begin position="1"/>
        <end position="110"/>
    </location>
</feature>
<dbReference type="EMBL" id="CP000112">
    <property type="protein sequence ID" value="ABB39049.1"/>
    <property type="molecule type" value="Genomic_DNA"/>
</dbReference>
<dbReference type="RefSeq" id="WP_011368140.1">
    <property type="nucleotide sequence ID" value="NC_007519.1"/>
</dbReference>
<dbReference type="SMR" id="Q30Z47"/>
<dbReference type="STRING" id="207559.Dde_2252"/>
<dbReference type="KEGG" id="dde:Dde_2252"/>
<dbReference type="eggNOG" id="COG0091">
    <property type="taxonomic scope" value="Bacteria"/>
</dbReference>
<dbReference type="HOGENOM" id="CLU_083987_3_3_7"/>
<dbReference type="Proteomes" id="UP000002710">
    <property type="component" value="Chromosome"/>
</dbReference>
<dbReference type="GO" id="GO:0022625">
    <property type="term" value="C:cytosolic large ribosomal subunit"/>
    <property type="evidence" value="ECO:0007669"/>
    <property type="project" value="TreeGrafter"/>
</dbReference>
<dbReference type="GO" id="GO:0019843">
    <property type="term" value="F:rRNA binding"/>
    <property type="evidence" value="ECO:0007669"/>
    <property type="project" value="UniProtKB-UniRule"/>
</dbReference>
<dbReference type="GO" id="GO:0003735">
    <property type="term" value="F:structural constituent of ribosome"/>
    <property type="evidence" value="ECO:0007669"/>
    <property type="project" value="InterPro"/>
</dbReference>
<dbReference type="GO" id="GO:0006412">
    <property type="term" value="P:translation"/>
    <property type="evidence" value="ECO:0007669"/>
    <property type="project" value="UniProtKB-UniRule"/>
</dbReference>
<dbReference type="CDD" id="cd00336">
    <property type="entry name" value="Ribosomal_L22"/>
    <property type="match status" value="1"/>
</dbReference>
<dbReference type="Gene3D" id="3.90.470.10">
    <property type="entry name" value="Ribosomal protein L22/L17"/>
    <property type="match status" value="1"/>
</dbReference>
<dbReference type="HAMAP" id="MF_01331_B">
    <property type="entry name" value="Ribosomal_uL22_B"/>
    <property type="match status" value="1"/>
</dbReference>
<dbReference type="InterPro" id="IPR001063">
    <property type="entry name" value="Ribosomal_uL22"/>
</dbReference>
<dbReference type="InterPro" id="IPR005727">
    <property type="entry name" value="Ribosomal_uL22_bac/chlpt-type"/>
</dbReference>
<dbReference type="InterPro" id="IPR047867">
    <property type="entry name" value="Ribosomal_uL22_bac/org-type"/>
</dbReference>
<dbReference type="InterPro" id="IPR018260">
    <property type="entry name" value="Ribosomal_uL22_CS"/>
</dbReference>
<dbReference type="InterPro" id="IPR036394">
    <property type="entry name" value="Ribosomal_uL22_sf"/>
</dbReference>
<dbReference type="NCBIfam" id="TIGR01044">
    <property type="entry name" value="rplV_bact"/>
    <property type="match status" value="1"/>
</dbReference>
<dbReference type="PANTHER" id="PTHR13501">
    <property type="entry name" value="CHLOROPLAST 50S RIBOSOMAL PROTEIN L22-RELATED"/>
    <property type="match status" value="1"/>
</dbReference>
<dbReference type="PANTHER" id="PTHR13501:SF8">
    <property type="entry name" value="LARGE RIBOSOMAL SUBUNIT PROTEIN UL22M"/>
    <property type="match status" value="1"/>
</dbReference>
<dbReference type="Pfam" id="PF00237">
    <property type="entry name" value="Ribosomal_L22"/>
    <property type="match status" value="1"/>
</dbReference>
<dbReference type="SUPFAM" id="SSF54843">
    <property type="entry name" value="Ribosomal protein L22"/>
    <property type="match status" value="1"/>
</dbReference>
<dbReference type="PROSITE" id="PS00464">
    <property type="entry name" value="RIBOSOMAL_L22"/>
    <property type="match status" value="1"/>
</dbReference>
<comment type="function">
    <text evidence="1">This protein binds specifically to 23S rRNA; its binding is stimulated by other ribosomal proteins, e.g. L4, L17, and L20. It is important during the early stages of 50S assembly. It makes multiple contacts with different domains of the 23S rRNA in the assembled 50S subunit and ribosome (By similarity).</text>
</comment>
<comment type="function">
    <text evidence="1">The globular domain of the protein is located near the polypeptide exit tunnel on the outside of the subunit, while an extended beta-hairpin is found that lines the wall of the exit tunnel in the center of the 70S ribosome.</text>
</comment>
<comment type="subunit">
    <text evidence="1">Part of the 50S ribosomal subunit.</text>
</comment>
<comment type="similarity">
    <text evidence="1">Belongs to the universal ribosomal protein uL22 family.</text>
</comment>
<reference key="1">
    <citation type="journal article" date="2011" name="J. Bacteriol.">
        <title>Complete genome sequence and updated annotation of Desulfovibrio alaskensis G20.</title>
        <authorList>
            <person name="Hauser L.J."/>
            <person name="Land M.L."/>
            <person name="Brown S.D."/>
            <person name="Larimer F."/>
            <person name="Keller K.L."/>
            <person name="Rapp-Giles B.J."/>
            <person name="Price M.N."/>
            <person name="Lin M."/>
            <person name="Bruce D.C."/>
            <person name="Detter J.C."/>
            <person name="Tapia R."/>
            <person name="Han C.S."/>
            <person name="Goodwin L.A."/>
            <person name="Cheng J.F."/>
            <person name="Pitluck S."/>
            <person name="Copeland A."/>
            <person name="Lucas S."/>
            <person name="Nolan M."/>
            <person name="Lapidus A.L."/>
            <person name="Palumbo A.V."/>
            <person name="Wall J.D."/>
        </authorList>
    </citation>
    <scope>NUCLEOTIDE SEQUENCE [LARGE SCALE GENOMIC DNA]</scope>
    <source>
        <strain>ATCC BAA-1058 / DSM 17464 / G20</strain>
    </source>
</reference>
<name>RL22_OLEA2</name>
<accession>Q30Z47</accession>
<keyword id="KW-1185">Reference proteome</keyword>
<keyword id="KW-0687">Ribonucleoprotein</keyword>
<keyword id="KW-0689">Ribosomal protein</keyword>
<keyword id="KW-0694">RNA-binding</keyword>
<keyword id="KW-0699">rRNA-binding</keyword>
<protein>
    <recommendedName>
        <fullName evidence="1">Large ribosomal subunit protein uL22</fullName>
    </recommendedName>
    <alternativeName>
        <fullName evidence="2">50S ribosomal protein L22</fullName>
    </alternativeName>
</protein>
<evidence type="ECO:0000255" key="1">
    <source>
        <dbReference type="HAMAP-Rule" id="MF_01331"/>
    </source>
</evidence>
<evidence type="ECO:0000305" key="2"/>